<proteinExistence type="inferred from homology"/>
<feature type="chain" id="PRO_0000124976" description="Large ribosomal subunit protein uL5">
    <location>
        <begin position="1"/>
        <end position="196"/>
    </location>
</feature>
<protein>
    <recommendedName>
        <fullName evidence="1">Large ribosomal subunit protein uL5</fullName>
    </recommendedName>
    <alternativeName>
        <fullName evidence="2">50S ribosomal protein L5</fullName>
    </alternativeName>
</protein>
<reference key="1">
    <citation type="journal article" date="2003" name="Proc. Natl. Acad. Sci. U.S.A.">
        <title>Complete genome sequence of the marine planctomycete Pirellula sp. strain 1.</title>
        <authorList>
            <person name="Gloeckner F.O."/>
            <person name="Kube M."/>
            <person name="Bauer M."/>
            <person name="Teeling H."/>
            <person name="Lombardot T."/>
            <person name="Ludwig W."/>
            <person name="Gade D."/>
            <person name="Beck A."/>
            <person name="Borzym K."/>
            <person name="Heitmann K."/>
            <person name="Rabus R."/>
            <person name="Schlesner H."/>
            <person name="Amann R."/>
            <person name="Reinhardt R."/>
        </authorList>
    </citation>
    <scope>NUCLEOTIDE SEQUENCE [LARGE SCALE GENOMIC DNA]</scope>
    <source>
        <strain>DSM 10527 / NCIMB 13988 / SH1</strain>
    </source>
</reference>
<accession>Q7UN08</accession>
<name>RL5_RHOBA</name>
<sequence length="196" mass="22151">MPNMSSNIPRMQQRYDESVRAALTETYGYKNVHQVPRLLKISMNMGVGAAVGDKKVLDLAIDSMTQITGQKPVTTIARKSIAGFRLREGMPIGCMVTMRRQRMYEFLDRLVSIVLPRVRDFRGISRKAFDGNGNYTLGLNEQLVFPELNPDKFVRPQGMNISFVTSAKTDDEAREMLRLFGMPFKQPKEKEQAGAA</sequence>
<comment type="function">
    <text evidence="1">This is one of the proteins that bind and probably mediate the attachment of the 5S RNA into the large ribosomal subunit, where it forms part of the central protuberance. In the 70S ribosome it contacts protein S13 of the 30S subunit (bridge B1b), connecting the 2 subunits; this bridge is implicated in subunit movement. Contacts the P site tRNA; the 5S rRNA and some of its associated proteins might help stabilize positioning of ribosome-bound tRNAs.</text>
</comment>
<comment type="subunit">
    <text evidence="1">Part of the 50S ribosomal subunit; part of the 5S rRNA/L5/L18/L25 subcomplex. Contacts the 5S rRNA and the P site tRNA. Forms a bridge to the 30S subunit in the 70S ribosome.</text>
</comment>
<comment type="similarity">
    <text evidence="1">Belongs to the universal ribosomal protein uL5 family.</text>
</comment>
<dbReference type="EMBL" id="BX294146">
    <property type="protein sequence ID" value="CAD75611.1"/>
    <property type="molecule type" value="Genomic_DNA"/>
</dbReference>
<dbReference type="RefSeq" id="NP_868064.1">
    <property type="nucleotide sequence ID" value="NC_005027.1"/>
</dbReference>
<dbReference type="SMR" id="Q7UN08"/>
<dbReference type="FunCoup" id="Q7UN08">
    <property type="interactions" value="583"/>
</dbReference>
<dbReference type="STRING" id="243090.RB7852"/>
<dbReference type="EnsemblBacteria" id="CAD75611">
    <property type="protein sequence ID" value="CAD75611"/>
    <property type="gene ID" value="RB7852"/>
</dbReference>
<dbReference type="KEGG" id="rba:RB7852"/>
<dbReference type="PATRIC" id="fig|243090.15.peg.3795"/>
<dbReference type="eggNOG" id="COG0094">
    <property type="taxonomic scope" value="Bacteria"/>
</dbReference>
<dbReference type="HOGENOM" id="CLU_061015_2_1_0"/>
<dbReference type="InParanoid" id="Q7UN08"/>
<dbReference type="OrthoDB" id="9806626at2"/>
<dbReference type="Proteomes" id="UP000001025">
    <property type="component" value="Chromosome"/>
</dbReference>
<dbReference type="GO" id="GO:0022625">
    <property type="term" value="C:cytosolic large ribosomal subunit"/>
    <property type="evidence" value="ECO:0000318"/>
    <property type="project" value="GO_Central"/>
</dbReference>
<dbReference type="GO" id="GO:0003723">
    <property type="term" value="F:RNA binding"/>
    <property type="evidence" value="ECO:0000318"/>
    <property type="project" value="GO_Central"/>
</dbReference>
<dbReference type="GO" id="GO:0019843">
    <property type="term" value="F:rRNA binding"/>
    <property type="evidence" value="ECO:0007669"/>
    <property type="project" value="UniProtKB-UniRule"/>
</dbReference>
<dbReference type="GO" id="GO:0003735">
    <property type="term" value="F:structural constituent of ribosome"/>
    <property type="evidence" value="ECO:0000318"/>
    <property type="project" value="GO_Central"/>
</dbReference>
<dbReference type="GO" id="GO:0000049">
    <property type="term" value="F:tRNA binding"/>
    <property type="evidence" value="ECO:0007669"/>
    <property type="project" value="UniProtKB-UniRule"/>
</dbReference>
<dbReference type="GO" id="GO:0006412">
    <property type="term" value="P:translation"/>
    <property type="evidence" value="ECO:0000318"/>
    <property type="project" value="GO_Central"/>
</dbReference>
<dbReference type="FunFam" id="3.30.1440.10:FF:000001">
    <property type="entry name" value="50S ribosomal protein L5"/>
    <property type="match status" value="1"/>
</dbReference>
<dbReference type="Gene3D" id="3.30.1440.10">
    <property type="match status" value="1"/>
</dbReference>
<dbReference type="HAMAP" id="MF_01333_B">
    <property type="entry name" value="Ribosomal_uL5_B"/>
    <property type="match status" value="1"/>
</dbReference>
<dbReference type="InterPro" id="IPR002132">
    <property type="entry name" value="Ribosomal_uL5"/>
</dbReference>
<dbReference type="InterPro" id="IPR020930">
    <property type="entry name" value="Ribosomal_uL5_bac-type"/>
</dbReference>
<dbReference type="InterPro" id="IPR031309">
    <property type="entry name" value="Ribosomal_uL5_C"/>
</dbReference>
<dbReference type="InterPro" id="IPR020929">
    <property type="entry name" value="Ribosomal_uL5_CS"/>
</dbReference>
<dbReference type="InterPro" id="IPR022803">
    <property type="entry name" value="Ribosomal_uL5_dom_sf"/>
</dbReference>
<dbReference type="InterPro" id="IPR031310">
    <property type="entry name" value="Ribosomal_uL5_N"/>
</dbReference>
<dbReference type="NCBIfam" id="NF000585">
    <property type="entry name" value="PRK00010.1"/>
    <property type="match status" value="1"/>
</dbReference>
<dbReference type="PANTHER" id="PTHR11994">
    <property type="entry name" value="60S RIBOSOMAL PROTEIN L11-RELATED"/>
    <property type="match status" value="1"/>
</dbReference>
<dbReference type="Pfam" id="PF00281">
    <property type="entry name" value="Ribosomal_L5"/>
    <property type="match status" value="1"/>
</dbReference>
<dbReference type="Pfam" id="PF00673">
    <property type="entry name" value="Ribosomal_L5_C"/>
    <property type="match status" value="1"/>
</dbReference>
<dbReference type="PIRSF" id="PIRSF002161">
    <property type="entry name" value="Ribosomal_L5"/>
    <property type="match status" value="1"/>
</dbReference>
<dbReference type="SUPFAM" id="SSF55282">
    <property type="entry name" value="RL5-like"/>
    <property type="match status" value="1"/>
</dbReference>
<dbReference type="PROSITE" id="PS00358">
    <property type="entry name" value="RIBOSOMAL_L5"/>
    <property type="match status" value="1"/>
</dbReference>
<keyword id="KW-1185">Reference proteome</keyword>
<keyword id="KW-0687">Ribonucleoprotein</keyword>
<keyword id="KW-0689">Ribosomal protein</keyword>
<keyword id="KW-0694">RNA-binding</keyword>
<keyword id="KW-0699">rRNA-binding</keyword>
<keyword id="KW-0820">tRNA-binding</keyword>
<organism>
    <name type="scientific">Rhodopirellula baltica (strain DSM 10527 / NCIMB 13988 / SH1)</name>
    <dbReference type="NCBI Taxonomy" id="243090"/>
    <lineage>
        <taxon>Bacteria</taxon>
        <taxon>Pseudomonadati</taxon>
        <taxon>Planctomycetota</taxon>
        <taxon>Planctomycetia</taxon>
        <taxon>Pirellulales</taxon>
        <taxon>Pirellulaceae</taxon>
        <taxon>Rhodopirellula</taxon>
    </lineage>
</organism>
<gene>
    <name evidence="1" type="primary">rplE</name>
    <name type="ordered locus">RB7852</name>
</gene>
<evidence type="ECO:0000255" key="1">
    <source>
        <dbReference type="HAMAP-Rule" id="MF_01333"/>
    </source>
</evidence>
<evidence type="ECO:0000305" key="2"/>